<comment type="function">
    <text evidence="1">Has a dual specificity toward Ser/Thr and Tyr-containing proteins.</text>
</comment>
<comment type="catalytic activity">
    <reaction evidence="3">
        <text>O-phospho-L-tyrosyl-[protein] + H2O = L-tyrosyl-[protein] + phosphate</text>
        <dbReference type="Rhea" id="RHEA:10684"/>
        <dbReference type="Rhea" id="RHEA-COMP:10136"/>
        <dbReference type="Rhea" id="RHEA-COMP:20101"/>
        <dbReference type="ChEBI" id="CHEBI:15377"/>
        <dbReference type="ChEBI" id="CHEBI:43474"/>
        <dbReference type="ChEBI" id="CHEBI:46858"/>
        <dbReference type="ChEBI" id="CHEBI:61978"/>
        <dbReference type="EC" id="3.1.3.48"/>
    </reaction>
</comment>
<comment type="catalytic activity">
    <reaction>
        <text>O-phospho-L-seryl-[protein] + H2O = L-seryl-[protein] + phosphate</text>
        <dbReference type="Rhea" id="RHEA:20629"/>
        <dbReference type="Rhea" id="RHEA-COMP:9863"/>
        <dbReference type="Rhea" id="RHEA-COMP:11604"/>
        <dbReference type="ChEBI" id="CHEBI:15377"/>
        <dbReference type="ChEBI" id="CHEBI:29999"/>
        <dbReference type="ChEBI" id="CHEBI:43474"/>
        <dbReference type="ChEBI" id="CHEBI:83421"/>
        <dbReference type="EC" id="3.1.3.16"/>
    </reaction>
</comment>
<comment type="catalytic activity">
    <reaction>
        <text>O-phospho-L-threonyl-[protein] + H2O = L-threonyl-[protein] + phosphate</text>
        <dbReference type="Rhea" id="RHEA:47004"/>
        <dbReference type="Rhea" id="RHEA-COMP:11060"/>
        <dbReference type="Rhea" id="RHEA-COMP:11605"/>
        <dbReference type="ChEBI" id="CHEBI:15377"/>
        <dbReference type="ChEBI" id="CHEBI:30013"/>
        <dbReference type="ChEBI" id="CHEBI:43474"/>
        <dbReference type="ChEBI" id="CHEBI:61977"/>
        <dbReference type="EC" id="3.1.3.16"/>
    </reaction>
</comment>
<comment type="similarity">
    <text evidence="5">Belongs to the protein-tyrosine phosphatase family. Non-receptor class dual specificity subfamily.</text>
</comment>
<comment type="caution">
    <text evidence="5">The gene for this protein is duplicated in strains AX3 and AX4. These strains contain a duplication of a segment of 750 kb of chromosome 2 compared to the corresponding sequence in strain AX2.</text>
</comment>
<protein>
    <recommendedName>
        <fullName>Probable rhodanese domain-containing dual specificity protein phosphatase</fullName>
        <ecNumber>3.1.3.16</ecNumber>
        <ecNumber>3.1.3.48</ecNumber>
    </recommendedName>
</protein>
<reference key="1">
    <citation type="journal article" date="2002" name="Nature">
        <title>Sequence and analysis of chromosome 2 of Dictyostelium discoideum.</title>
        <authorList>
            <person name="Gloeckner G."/>
            <person name="Eichinger L."/>
            <person name="Szafranski K."/>
            <person name="Pachebat J.A."/>
            <person name="Bankier A.T."/>
            <person name="Dear P.H."/>
            <person name="Lehmann R."/>
            <person name="Baumgart C."/>
            <person name="Parra G."/>
            <person name="Abril J.F."/>
            <person name="Guigo R."/>
            <person name="Kumpf K."/>
            <person name="Tunggal B."/>
            <person name="Cox E.C."/>
            <person name="Quail M.A."/>
            <person name="Platzer M."/>
            <person name="Rosenthal A."/>
            <person name="Noegel A.A."/>
        </authorList>
    </citation>
    <scope>NUCLEOTIDE SEQUENCE [LARGE SCALE GENOMIC DNA]</scope>
    <source>
        <strain>AX4</strain>
    </source>
</reference>
<reference key="2">
    <citation type="journal article" date="2005" name="Nature">
        <title>The genome of the social amoeba Dictyostelium discoideum.</title>
        <authorList>
            <person name="Eichinger L."/>
            <person name="Pachebat J.A."/>
            <person name="Gloeckner G."/>
            <person name="Rajandream M.A."/>
            <person name="Sucgang R."/>
            <person name="Berriman M."/>
            <person name="Song J."/>
            <person name="Olsen R."/>
            <person name="Szafranski K."/>
            <person name="Xu Q."/>
            <person name="Tunggal B."/>
            <person name="Kummerfeld S."/>
            <person name="Madera M."/>
            <person name="Konfortov B.A."/>
            <person name="Rivero F."/>
            <person name="Bankier A.T."/>
            <person name="Lehmann R."/>
            <person name="Hamlin N."/>
            <person name="Davies R."/>
            <person name="Gaudet P."/>
            <person name="Fey P."/>
            <person name="Pilcher K."/>
            <person name="Chen G."/>
            <person name="Saunders D."/>
            <person name="Sodergren E.J."/>
            <person name="Davis P."/>
            <person name="Kerhornou A."/>
            <person name="Nie X."/>
            <person name="Hall N."/>
            <person name="Anjard C."/>
            <person name="Hemphill L."/>
            <person name="Bason N."/>
            <person name="Farbrother P."/>
            <person name="Desany B."/>
            <person name="Just E."/>
            <person name="Morio T."/>
            <person name="Rost R."/>
            <person name="Churcher C.M."/>
            <person name="Cooper J."/>
            <person name="Haydock S."/>
            <person name="van Driessche N."/>
            <person name="Cronin A."/>
            <person name="Goodhead I."/>
            <person name="Muzny D.M."/>
            <person name="Mourier T."/>
            <person name="Pain A."/>
            <person name="Lu M."/>
            <person name="Harper D."/>
            <person name="Lindsay R."/>
            <person name="Hauser H."/>
            <person name="James K.D."/>
            <person name="Quiles M."/>
            <person name="Madan Babu M."/>
            <person name="Saito T."/>
            <person name="Buchrieser C."/>
            <person name="Wardroper A."/>
            <person name="Felder M."/>
            <person name="Thangavelu M."/>
            <person name="Johnson D."/>
            <person name="Knights A."/>
            <person name="Loulseged H."/>
            <person name="Mungall K.L."/>
            <person name="Oliver K."/>
            <person name="Price C."/>
            <person name="Quail M.A."/>
            <person name="Urushihara H."/>
            <person name="Hernandez J."/>
            <person name="Rabbinowitsch E."/>
            <person name="Steffen D."/>
            <person name="Sanders M."/>
            <person name="Ma J."/>
            <person name="Kohara Y."/>
            <person name="Sharp S."/>
            <person name="Simmonds M.N."/>
            <person name="Spiegler S."/>
            <person name="Tivey A."/>
            <person name="Sugano S."/>
            <person name="White B."/>
            <person name="Walker D."/>
            <person name="Woodward J.R."/>
            <person name="Winckler T."/>
            <person name="Tanaka Y."/>
            <person name="Shaulsky G."/>
            <person name="Schleicher M."/>
            <person name="Weinstock G.M."/>
            <person name="Rosenthal A."/>
            <person name="Cox E.C."/>
            <person name="Chisholm R.L."/>
            <person name="Gibbs R.A."/>
            <person name="Loomis W.F."/>
            <person name="Platzer M."/>
            <person name="Kay R.R."/>
            <person name="Williams J.G."/>
            <person name="Dear P.H."/>
            <person name="Noegel A.A."/>
            <person name="Barrell B.G."/>
            <person name="Kuspa A."/>
        </authorList>
    </citation>
    <scope>NUCLEOTIDE SEQUENCE [LARGE SCALE GENOMIC DNA]</scope>
    <source>
        <strain>AX4</strain>
    </source>
</reference>
<keyword id="KW-0378">Hydrolase</keyword>
<keyword id="KW-0904">Protein phosphatase</keyword>
<keyword id="KW-1185">Reference proteome</keyword>
<sequence length="476" mass="53798">MVLINRVNIQPEELPLLYHVNSMDVYNLLQDIGSSKIIIDLRTKEQYEKNHIRTSVNIPPPPSTTPLYENGEIKEFNLSKYIGSNVTAKHWNLIFQKLIVYSDKPFLYNIDELEKTISTTTITTTATTTTTTTTTSNSIGSDQDIIKSLKVSDWDKVVLRHFLLKKKKTKVIIYQGGFDQFQKDYSFMCNPSSSPSSSSGGGGGSQLYPSEIIKDFLYLGGAENAGNRQQLINLKITHLVNMAGELDDVYPHLYKYYRANLDDRPKANIYEHFEPVIQFINDCKKQGGRVLIHCAMGISRSTTVVLAYLMKEDHMTYSDAFTFCKQKRSCINPNFGFVKQLKDYQQHLTLEWEKQEKLKKQQQQTLNINNNNTGIPLSKKLQLDVSDPLSNSSPSSPLISSTLPIPETPPAIILKNEVASPCPIKTTTSSTTINNKGQQQDKAQEEKDSIFSYADKQEKMTHPTLHSPIELPQSSL</sequence>
<feature type="chain" id="PRO_0000332954" description="Probable rhodanese domain-containing dual specificity protein phosphatase">
    <location>
        <begin position="1"/>
        <end position="476"/>
    </location>
</feature>
<feature type="domain" description="Rhodanese">
    <location>
        <begin position="32"/>
        <end position="190"/>
    </location>
</feature>
<feature type="domain" description="Tyrosine-protein phosphatase" evidence="2">
    <location>
        <begin position="208"/>
        <end position="350"/>
    </location>
</feature>
<feature type="region of interest" description="Disordered" evidence="4">
    <location>
        <begin position="425"/>
        <end position="476"/>
    </location>
</feature>
<feature type="compositionally biased region" description="Low complexity" evidence="4">
    <location>
        <begin position="425"/>
        <end position="436"/>
    </location>
</feature>
<feature type="compositionally biased region" description="Basic and acidic residues" evidence="4">
    <location>
        <begin position="442"/>
        <end position="461"/>
    </location>
</feature>
<feature type="active site" description="Phosphocysteine intermediate" evidence="2">
    <location>
        <position position="294"/>
    </location>
</feature>
<gene>
    <name type="ORF">DDB_G0273199</name>
</gene>
<gene>
    <name type="ORF">DDB_G0273729</name>
</gene>
<dbReference type="EC" id="3.1.3.16"/>
<dbReference type="EC" id="3.1.3.48"/>
<dbReference type="EMBL" id="AAFI02000011">
    <property type="protein sequence ID" value="EAL70555.1"/>
    <property type="molecule type" value="Genomic_DNA"/>
</dbReference>
<dbReference type="EMBL" id="AAFI02000009">
    <property type="protein sequence ID" value="EAL70817.1"/>
    <property type="molecule type" value="Genomic_DNA"/>
</dbReference>
<dbReference type="RefSeq" id="XP_644481.1">
    <property type="nucleotide sequence ID" value="XM_639389.1"/>
</dbReference>
<dbReference type="RefSeq" id="XP_644769.1">
    <property type="nucleotide sequence ID" value="XM_639677.1"/>
</dbReference>
<dbReference type="SMR" id="Q556Y8"/>
<dbReference type="STRING" id="44689.Q556Y8"/>
<dbReference type="PaxDb" id="44689-DDB0238327"/>
<dbReference type="EnsemblProtists" id="EAL70555">
    <property type="protein sequence ID" value="EAL70555"/>
    <property type="gene ID" value="DDB_G0273729"/>
</dbReference>
<dbReference type="EnsemblProtists" id="EAL70817">
    <property type="protein sequence ID" value="EAL70817"/>
    <property type="gene ID" value="DDB_G0273199"/>
</dbReference>
<dbReference type="GeneID" id="8618871"/>
<dbReference type="GeneID" id="8619105"/>
<dbReference type="KEGG" id="ddi:DDB_G0273199"/>
<dbReference type="KEGG" id="ddi:DDB_G0273729"/>
<dbReference type="dictyBase" id="DDB_G0273199">
    <property type="gene designation" value="mkpB-1"/>
</dbReference>
<dbReference type="dictyBase" id="DDB_G0273729">
    <property type="gene designation" value="mkpB-2"/>
</dbReference>
<dbReference type="VEuPathDB" id="AmoebaDB:DDB_G0273199"/>
<dbReference type="eggNOG" id="KOG1716">
    <property type="taxonomic scope" value="Eukaryota"/>
</dbReference>
<dbReference type="HOGENOM" id="CLU_574186_0_0_1"/>
<dbReference type="InParanoid" id="Q556Y8"/>
<dbReference type="OMA" id="PHLYKYY"/>
<dbReference type="Reactome" id="R-DDI-112409">
    <property type="pathway name" value="RAF-independent MAPK1/3 activation"/>
</dbReference>
<dbReference type="Reactome" id="R-DDI-202670">
    <property type="pathway name" value="ERKs are inactivated"/>
</dbReference>
<dbReference type="Reactome" id="R-DDI-5675221">
    <property type="pathway name" value="Negative regulation of MAPK pathway"/>
</dbReference>
<dbReference type="PRO" id="PR:Q556Y8"/>
<dbReference type="Proteomes" id="UP000002195">
    <property type="component" value="Chromosome 2"/>
</dbReference>
<dbReference type="GO" id="GO:0005737">
    <property type="term" value="C:cytoplasm"/>
    <property type="evidence" value="ECO:0000318"/>
    <property type="project" value="GO_Central"/>
</dbReference>
<dbReference type="GO" id="GO:0033550">
    <property type="term" value="F:MAP kinase tyrosine phosphatase activity"/>
    <property type="evidence" value="ECO:0000318"/>
    <property type="project" value="GO_Central"/>
</dbReference>
<dbReference type="GO" id="GO:0017017">
    <property type="term" value="F:MAP kinase tyrosine/serine/threonine phosphatase activity"/>
    <property type="evidence" value="ECO:0000318"/>
    <property type="project" value="GO_Central"/>
</dbReference>
<dbReference type="GO" id="GO:0004721">
    <property type="term" value="F:phosphoprotein phosphatase activity"/>
    <property type="evidence" value="ECO:0000315"/>
    <property type="project" value="dictyBase"/>
</dbReference>
<dbReference type="GO" id="GO:0004722">
    <property type="term" value="F:protein serine/threonine phosphatase activity"/>
    <property type="evidence" value="ECO:0007669"/>
    <property type="project" value="UniProtKB-EC"/>
</dbReference>
<dbReference type="GO" id="GO:0008330">
    <property type="term" value="F:protein tyrosine/threonine phosphatase activity"/>
    <property type="evidence" value="ECO:0000318"/>
    <property type="project" value="GO_Central"/>
</dbReference>
<dbReference type="GO" id="GO:0043409">
    <property type="term" value="P:negative regulation of MAPK cascade"/>
    <property type="evidence" value="ECO:0000318"/>
    <property type="project" value="GO_Central"/>
</dbReference>
<dbReference type="GO" id="GO:0072718">
    <property type="term" value="P:response to cisplatin"/>
    <property type="evidence" value="ECO:0000315"/>
    <property type="project" value="dictyBase"/>
</dbReference>
<dbReference type="GO" id="GO:0007165">
    <property type="term" value="P:signal transduction"/>
    <property type="evidence" value="ECO:0000318"/>
    <property type="project" value="GO_Central"/>
</dbReference>
<dbReference type="GO" id="GO:0030587">
    <property type="term" value="P:sorocarp development"/>
    <property type="evidence" value="ECO:0000315"/>
    <property type="project" value="dictyBase"/>
</dbReference>
<dbReference type="CDD" id="cd14498">
    <property type="entry name" value="DSP"/>
    <property type="match status" value="1"/>
</dbReference>
<dbReference type="CDD" id="cd00158">
    <property type="entry name" value="RHOD"/>
    <property type="match status" value="1"/>
</dbReference>
<dbReference type="FunFam" id="3.40.250.10:FF:000136">
    <property type="entry name" value="Probable rhodanese domain-containing dual specificity protein phosphatase"/>
    <property type="match status" value="1"/>
</dbReference>
<dbReference type="FunFam" id="3.90.190.10:FF:000004">
    <property type="entry name" value="Protein phosphatase Slingshot homolog 2"/>
    <property type="match status" value="1"/>
</dbReference>
<dbReference type="Gene3D" id="3.90.190.10">
    <property type="entry name" value="Protein tyrosine phosphatase superfamily"/>
    <property type="match status" value="1"/>
</dbReference>
<dbReference type="Gene3D" id="3.40.250.10">
    <property type="entry name" value="Rhodanese-like domain"/>
    <property type="match status" value="1"/>
</dbReference>
<dbReference type="InterPro" id="IPR000340">
    <property type="entry name" value="Dual-sp_phosphatase_cat-dom"/>
</dbReference>
<dbReference type="InterPro" id="IPR029021">
    <property type="entry name" value="Prot-tyrosine_phosphatase-like"/>
</dbReference>
<dbReference type="InterPro" id="IPR001763">
    <property type="entry name" value="Rhodanese-like_dom"/>
</dbReference>
<dbReference type="InterPro" id="IPR036873">
    <property type="entry name" value="Rhodanese-like_dom_sf"/>
</dbReference>
<dbReference type="InterPro" id="IPR016130">
    <property type="entry name" value="Tyr_Pase_AS"/>
</dbReference>
<dbReference type="InterPro" id="IPR003595">
    <property type="entry name" value="Tyr_Pase_cat"/>
</dbReference>
<dbReference type="InterPro" id="IPR000387">
    <property type="entry name" value="Tyr_Pase_dom"/>
</dbReference>
<dbReference type="InterPro" id="IPR020422">
    <property type="entry name" value="TYR_PHOSPHATASE_DUAL_dom"/>
</dbReference>
<dbReference type="PANTHER" id="PTHR10159">
    <property type="entry name" value="DUAL SPECIFICITY PROTEIN PHOSPHATASE"/>
    <property type="match status" value="1"/>
</dbReference>
<dbReference type="PANTHER" id="PTHR10159:SF414">
    <property type="entry name" value="PROTEIN-TYROSINE-PHOSPHATASE-RELATED"/>
    <property type="match status" value="1"/>
</dbReference>
<dbReference type="Pfam" id="PF00782">
    <property type="entry name" value="DSPc"/>
    <property type="match status" value="1"/>
</dbReference>
<dbReference type="Pfam" id="PF00581">
    <property type="entry name" value="Rhodanese"/>
    <property type="match status" value="1"/>
</dbReference>
<dbReference type="SMART" id="SM00195">
    <property type="entry name" value="DSPc"/>
    <property type="match status" value="1"/>
</dbReference>
<dbReference type="SMART" id="SM00404">
    <property type="entry name" value="PTPc_motif"/>
    <property type="match status" value="1"/>
</dbReference>
<dbReference type="SUPFAM" id="SSF52799">
    <property type="entry name" value="(Phosphotyrosine protein) phosphatases II"/>
    <property type="match status" value="1"/>
</dbReference>
<dbReference type="SUPFAM" id="SSF52821">
    <property type="entry name" value="Rhodanese/Cell cycle control phosphatase"/>
    <property type="match status" value="1"/>
</dbReference>
<dbReference type="PROSITE" id="PS00383">
    <property type="entry name" value="TYR_PHOSPHATASE_1"/>
    <property type="match status" value="1"/>
</dbReference>
<dbReference type="PROSITE" id="PS50056">
    <property type="entry name" value="TYR_PHOSPHATASE_2"/>
    <property type="match status" value="1"/>
</dbReference>
<dbReference type="PROSITE" id="PS50054">
    <property type="entry name" value="TYR_PHOSPHATASE_DUAL"/>
    <property type="match status" value="1"/>
</dbReference>
<proteinExistence type="inferred from homology"/>
<evidence type="ECO:0000250" key="1"/>
<evidence type="ECO:0000255" key="2">
    <source>
        <dbReference type="PROSITE-ProRule" id="PRU00160"/>
    </source>
</evidence>
<evidence type="ECO:0000255" key="3">
    <source>
        <dbReference type="PROSITE-ProRule" id="PRU10044"/>
    </source>
</evidence>
<evidence type="ECO:0000256" key="4">
    <source>
        <dbReference type="SAM" id="MobiDB-lite"/>
    </source>
</evidence>
<evidence type="ECO:0000305" key="5"/>
<name>DUSPR_DICDI</name>
<organism>
    <name type="scientific">Dictyostelium discoideum</name>
    <name type="common">Social amoeba</name>
    <dbReference type="NCBI Taxonomy" id="44689"/>
    <lineage>
        <taxon>Eukaryota</taxon>
        <taxon>Amoebozoa</taxon>
        <taxon>Evosea</taxon>
        <taxon>Eumycetozoa</taxon>
        <taxon>Dictyostelia</taxon>
        <taxon>Dictyosteliales</taxon>
        <taxon>Dictyosteliaceae</taxon>
        <taxon>Dictyostelium</taxon>
    </lineage>
</organism>
<accession>Q556Y8</accession>
<accession>Q86JT3</accession>